<sequence>MNKQRFLFAAKISGIHFLLSFVVALALAGLIFFVWYPFPYQKIMGSFKLFFLISGIDVCCGPLLTFILSNPQKRLKECIIDFSLIIFIQLSAFIYGMYNIYLARPVAVVFELDSIRILSKGDILLDELPQALPEFRQFPYFGHHLLAVRGWKNAEERKEGVEKAFQGFDIAQRPTLWVAYSSELEKIRKAAKPLAQSFSKLNAKQQQDVKTALQKARLNMEEAFFLPLVSNRSMEWMVILDKNMNITTAVEIDAFEL</sequence>
<accession>P27905</accession>
<feature type="chain" id="PRO_0000087250" description="Fimbrial assembly protein, serogroup E1">
    <location>
        <begin position="1"/>
        <end position="257"/>
    </location>
</feature>
<keyword id="KW-1029">Fimbrium biogenesis</keyword>
<protein>
    <recommendedName>
        <fullName>Fimbrial assembly protein, serogroup E1</fullName>
    </recommendedName>
</protein>
<proteinExistence type="predicted"/>
<dbReference type="EMBL" id="M32230">
    <property type="protein sequence ID" value="AAA23343.1"/>
    <property type="molecule type" value="Genomic_DNA"/>
</dbReference>
<dbReference type="PIR" id="S15252">
    <property type="entry name" value="YQBZE1"/>
</dbReference>
<gene>
    <name type="primary">fimB</name>
</gene>
<reference key="1">
    <citation type="journal article" date="1991" name="Mol. Microbiol.">
        <title>Organization of the fimbrial gene region of Bacteroides nodosus: class I and class II strains.</title>
        <authorList>
            <person name="Hobbs M."/>
            <person name="Dalrymple B.P."/>
            <person name="Cox P.T."/>
            <person name="Livingstone S.P."/>
            <person name="Delaney S.F."/>
            <person name="Mattick J.S."/>
        </authorList>
    </citation>
    <scope>NUCLEOTIDE SEQUENCE [GENOMIC DNA]</scope>
</reference>
<organism>
    <name type="scientific">Dichelobacter nodosus</name>
    <name type="common">Bacteroides nodosus</name>
    <dbReference type="NCBI Taxonomy" id="870"/>
    <lineage>
        <taxon>Bacteria</taxon>
        <taxon>Pseudomonadati</taxon>
        <taxon>Pseudomonadota</taxon>
        <taxon>Gammaproteobacteria</taxon>
        <taxon>Cardiobacteriales</taxon>
        <taxon>Cardiobacteriaceae</taxon>
        <taxon>Dichelobacter</taxon>
    </lineage>
</organism>
<name>FIMBX_DICNO</name>